<proteinExistence type="inferred from homology"/>
<dbReference type="EMBL" id="CP000023">
    <property type="protein sequence ID" value="AAV60193.1"/>
    <property type="molecule type" value="Genomic_DNA"/>
</dbReference>
<dbReference type="RefSeq" id="WP_002949964.1">
    <property type="nucleotide sequence ID" value="NC_006448.1"/>
</dbReference>
<dbReference type="SMR" id="Q5M5J2"/>
<dbReference type="STRING" id="264199.stu0483"/>
<dbReference type="KEGG" id="stl:stu0483"/>
<dbReference type="eggNOG" id="COG0224">
    <property type="taxonomic scope" value="Bacteria"/>
</dbReference>
<dbReference type="HOGENOM" id="CLU_050669_0_1_9"/>
<dbReference type="Proteomes" id="UP000001170">
    <property type="component" value="Chromosome"/>
</dbReference>
<dbReference type="GO" id="GO:0005886">
    <property type="term" value="C:plasma membrane"/>
    <property type="evidence" value="ECO:0007669"/>
    <property type="project" value="UniProtKB-SubCell"/>
</dbReference>
<dbReference type="GO" id="GO:0045259">
    <property type="term" value="C:proton-transporting ATP synthase complex"/>
    <property type="evidence" value="ECO:0007669"/>
    <property type="project" value="UniProtKB-KW"/>
</dbReference>
<dbReference type="GO" id="GO:0005524">
    <property type="term" value="F:ATP binding"/>
    <property type="evidence" value="ECO:0007669"/>
    <property type="project" value="UniProtKB-UniRule"/>
</dbReference>
<dbReference type="GO" id="GO:0046933">
    <property type="term" value="F:proton-transporting ATP synthase activity, rotational mechanism"/>
    <property type="evidence" value="ECO:0007669"/>
    <property type="project" value="UniProtKB-UniRule"/>
</dbReference>
<dbReference type="GO" id="GO:0042777">
    <property type="term" value="P:proton motive force-driven plasma membrane ATP synthesis"/>
    <property type="evidence" value="ECO:0007669"/>
    <property type="project" value="UniProtKB-UniRule"/>
</dbReference>
<dbReference type="CDD" id="cd12151">
    <property type="entry name" value="F1-ATPase_gamma"/>
    <property type="match status" value="1"/>
</dbReference>
<dbReference type="FunFam" id="3.40.1380.10:FF:000002">
    <property type="entry name" value="ATP synthase gamma chain"/>
    <property type="match status" value="1"/>
</dbReference>
<dbReference type="Gene3D" id="3.40.1380.10">
    <property type="match status" value="1"/>
</dbReference>
<dbReference type="Gene3D" id="1.10.287.80">
    <property type="entry name" value="ATP synthase, gamma subunit, helix hairpin domain"/>
    <property type="match status" value="1"/>
</dbReference>
<dbReference type="HAMAP" id="MF_00815">
    <property type="entry name" value="ATP_synth_gamma_bact"/>
    <property type="match status" value="1"/>
</dbReference>
<dbReference type="InterPro" id="IPR035968">
    <property type="entry name" value="ATP_synth_F1_ATPase_gsu"/>
</dbReference>
<dbReference type="InterPro" id="IPR000131">
    <property type="entry name" value="ATP_synth_F1_gsu"/>
</dbReference>
<dbReference type="InterPro" id="IPR023632">
    <property type="entry name" value="ATP_synth_F1_gsu_CS"/>
</dbReference>
<dbReference type="NCBIfam" id="TIGR01146">
    <property type="entry name" value="ATPsyn_F1gamma"/>
    <property type="match status" value="1"/>
</dbReference>
<dbReference type="NCBIfam" id="NF004147">
    <property type="entry name" value="PRK05621.2-1"/>
    <property type="match status" value="1"/>
</dbReference>
<dbReference type="PANTHER" id="PTHR11693">
    <property type="entry name" value="ATP SYNTHASE GAMMA CHAIN"/>
    <property type="match status" value="1"/>
</dbReference>
<dbReference type="PANTHER" id="PTHR11693:SF22">
    <property type="entry name" value="ATP SYNTHASE SUBUNIT GAMMA, MITOCHONDRIAL"/>
    <property type="match status" value="1"/>
</dbReference>
<dbReference type="Pfam" id="PF00231">
    <property type="entry name" value="ATP-synt"/>
    <property type="match status" value="1"/>
</dbReference>
<dbReference type="PRINTS" id="PR00126">
    <property type="entry name" value="ATPASEGAMMA"/>
</dbReference>
<dbReference type="SUPFAM" id="SSF52943">
    <property type="entry name" value="ATP synthase (F1-ATPase), gamma subunit"/>
    <property type="match status" value="1"/>
</dbReference>
<dbReference type="PROSITE" id="PS00153">
    <property type="entry name" value="ATPASE_GAMMA"/>
    <property type="match status" value="1"/>
</dbReference>
<evidence type="ECO:0000255" key="1">
    <source>
        <dbReference type="HAMAP-Rule" id="MF_00815"/>
    </source>
</evidence>
<feature type="chain" id="PRO_0000073396" description="ATP synthase gamma chain">
    <location>
        <begin position="1"/>
        <end position="292"/>
    </location>
</feature>
<accession>Q5M5J2</accession>
<protein>
    <recommendedName>
        <fullName evidence="1">ATP synthase gamma chain</fullName>
    </recommendedName>
    <alternativeName>
        <fullName evidence="1">ATP synthase F1 sector gamma subunit</fullName>
    </alternativeName>
    <alternativeName>
        <fullName evidence="1">F-ATPase gamma subunit</fullName>
    </alternativeName>
</protein>
<comment type="function">
    <text evidence="1">Produces ATP from ADP in the presence of a proton gradient across the membrane. The gamma chain is believed to be important in regulating ATPase activity and the flow of protons through the CF(0) complex.</text>
</comment>
<comment type="subunit">
    <text evidence="1">F-type ATPases have 2 components, CF(1) - the catalytic core - and CF(0) - the membrane proton channel. CF(1) has five subunits: alpha(3), beta(3), gamma(1), delta(1), epsilon(1). CF(0) has three main subunits: a, b and c.</text>
</comment>
<comment type="subcellular location">
    <subcellularLocation>
        <location evidence="1">Cell membrane</location>
        <topology evidence="1">Peripheral membrane protein</topology>
    </subcellularLocation>
</comment>
<comment type="similarity">
    <text evidence="1">Belongs to the ATPase gamma chain family.</text>
</comment>
<keyword id="KW-0066">ATP synthesis</keyword>
<keyword id="KW-1003">Cell membrane</keyword>
<keyword id="KW-0139">CF(1)</keyword>
<keyword id="KW-0375">Hydrogen ion transport</keyword>
<keyword id="KW-0406">Ion transport</keyword>
<keyword id="KW-0472">Membrane</keyword>
<keyword id="KW-1185">Reference proteome</keyword>
<keyword id="KW-0813">Transport</keyword>
<gene>
    <name evidence="1" type="primary">atpG</name>
    <name type="ordered locus">stu0483</name>
</gene>
<reference key="1">
    <citation type="journal article" date="2004" name="Nat. Biotechnol.">
        <title>Complete sequence and comparative genome analysis of the dairy bacterium Streptococcus thermophilus.</title>
        <authorList>
            <person name="Bolotin A."/>
            <person name="Quinquis B."/>
            <person name="Renault P."/>
            <person name="Sorokin A."/>
            <person name="Ehrlich S.D."/>
            <person name="Kulakauskas S."/>
            <person name="Lapidus A."/>
            <person name="Goltsman E."/>
            <person name="Mazur M."/>
            <person name="Pusch G.D."/>
            <person name="Fonstein M."/>
            <person name="Overbeek R."/>
            <person name="Kyprides N."/>
            <person name="Purnelle B."/>
            <person name="Prozzi D."/>
            <person name="Ngui K."/>
            <person name="Masuy D."/>
            <person name="Hancy F."/>
            <person name="Burteau S."/>
            <person name="Boutry M."/>
            <person name="Delcour J."/>
            <person name="Goffeau A."/>
            <person name="Hols P."/>
        </authorList>
    </citation>
    <scope>NUCLEOTIDE SEQUENCE [LARGE SCALE GENOMIC DNA]</scope>
    <source>
        <strain>ATCC BAA-250 / LMG 18311</strain>
    </source>
</reference>
<sequence length="292" mass="32222">MAGSLREIKAKIASIKQTSHITGAMQMVSASKLTRSEQAAKDFQIYASKIRQITTDLLHSELVNGSSNPMLDARPVRKSGYIVITSDKGLVGGYNSTILKAVLDMIKRDHDSEDEYAIISIGGTGSDFFKARNMNVAFELRGLEDQPSFDQVGKIISKAVGMYQNELFDELYVCYNHHINSLSREVRVEKMLPIADFDPNESEGHVLTKFELEPDRDTILDQLLPQYAESLIYGAIVDAKTAEHAAGMTAMQTATDNAKKIINDLTIQYNRARQAAITQEITEIVGGASALE</sequence>
<organism>
    <name type="scientific">Streptococcus thermophilus (strain ATCC BAA-250 / LMG 18311)</name>
    <dbReference type="NCBI Taxonomy" id="264199"/>
    <lineage>
        <taxon>Bacteria</taxon>
        <taxon>Bacillati</taxon>
        <taxon>Bacillota</taxon>
        <taxon>Bacilli</taxon>
        <taxon>Lactobacillales</taxon>
        <taxon>Streptococcaceae</taxon>
        <taxon>Streptococcus</taxon>
    </lineage>
</organism>
<name>ATPG_STRT2</name>